<feature type="chain" id="PRO_0000329321" description="General transcription factor IIH subunit 3">
    <location>
        <begin position="1"/>
        <end position="309"/>
    </location>
</feature>
<feature type="zinc finger region" description="C4-type">
    <location>
        <begin position="269"/>
        <end position="286"/>
    </location>
</feature>
<protein>
    <recommendedName>
        <fullName>General transcription factor IIH subunit 3</fullName>
    </recommendedName>
    <alternativeName>
        <fullName>General transcription factor IIH polypeptide 3</fullName>
    </alternativeName>
</protein>
<gene>
    <name type="primary">GTF2H3</name>
</gene>
<keyword id="KW-0227">DNA damage</keyword>
<keyword id="KW-0234">DNA repair</keyword>
<keyword id="KW-0479">Metal-binding</keyword>
<keyword id="KW-0539">Nucleus</keyword>
<keyword id="KW-1185">Reference proteome</keyword>
<keyword id="KW-0804">Transcription</keyword>
<keyword id="KW-0805">Transcription regulation</keyword>
<keyword id="KW-0862">Zinc</keyword>
<keyword id="KW-0863">Zinc-finger</keyword>
<dbReference type="EMBL" id="BC122792">
    <property type="protein sequence ID" value="AAI22793.1"/>
    <property type="molecule type" value="mRNA"/>
</dbReference>
<dbReference type="RefSeq" id="NP_001073057.1">
    <property type="nucleotide sequence ID" value="NM_001079589.1"/>
</dbReference>
<dbReference type="SMR" id="Q05B56"/>
<dbReference type="FunCoup" id="Q05B56">
    <property type="interactions" value="3919"/>
</dbReference>
<dbReference type="STRING" id="9913.ENSBTAP00000009561"/>
<dbReference type="PaxDb" id="9913-ENSBTAP00000009561"/>
<dbReference type="GeneID" id="511896"/>
<dbReference type="KEGG" id="bta:511896"/>
<dbReference type="CTD" id="2967"/>
<dbReference type="VEuPathDB" id="HostDB:ENSBTAG00000007270"/>
<dbReference type="eggNOG" id="KOG2487">
    <property type="taxonomic scope" value="Eukaryota"/>
</dbReference>
<dbReference type="HOGENOM" id="CLU_040211_1_0_1"/>
<dbReference type="InParanoid" id="Q05B56"/>
<dbReference type="OMA" id="QGCDITS"/>
<dbReference type="OrthoDB" id="17307at2759"/>
<dbReference type="Reactome" id="R-BTA-113418">
    <property type="pathway name" value="Formation of the Early Elongation Complex"/>
</dbReference>
<dbReference type="Reactome" id="R-BTA-5696395">
    <property type="pathway name" value="Formation of Incision Complex in GG-NER"/>
</dbReference>
<dbReference type="Reactome" id="R-BTA-5696400">
    <property type="pathway name" value="Dual Incision in GG-NER"/>
</dbReference>
<dbReference type="Reactome" id="R-BTA-674695">
    <property type="pathway name" value="RNA Polymerase II Pre-transcription Events"/>
</dbReference>
<dbReference type="Reactome" id="R-BTA-6781823">
    <property type="pathway name" value="Formation of TC-NER Pre-Incision Complex"/>
</dbReference>
<dbReference type="Reactome" id="R-BTA-6782135">
    <property type="pathway name" value="Dual incision in TC-NER"/>
</dbReference>
<dbReference type="Reactome" id="R-BTA-6782210">
    <property type="pathway name" value="Gap-filling DNA repair synthesis and ligation in TC-NER"/>
</dbReference>
<dbReference type="Reactome" id="R-BTA-6796648">
    <property type="pathway name" value="TP53 Regulates Transcription of DNA Repair Genes"/>
</dbReference>
<dbReference type="Reactome" id="R-BTA-72086">
    <property type="pathway name" value="mRNA Capping"/>
</dbReference>
<dbReference type="Reactome" id="R-BTA-73762">
    <property type="pathway name" value="RNA Polymerase I Transcription Initiation"/>
</dbReference>
<dbReference type="Reactome" id="R-BTA-73772">
    <property type="pathway name" value="RNA Polymerase I Promoter Escape"/>
</dbReference>
<dbReference type="Reactome" id="R-BTA-73776">
    <property type="pathway name" value="RNA Polymerase II Promoter Escape"/>
</dbReference>
<dbReference type="Reactome" id="R-BTA-73779">
    <property type="pathway name" value="RNA Polymerase II Transcription Pre-Initiation And Promoter Opening"/>
</dbReference>
<dbReference type="Reactome" id="R-BTA-73863">
    <property type="pathway name" value="RNA Polymerase I Transcription Termination"/>
</dbReference>
<dbReference type="Reactome" id="R-BTA-75953">
    <property type="pathway name" value="RNA Polymerase II Transcription Initiation"/>
</dbReference>
<dbReference type="Reactome" id="R-BTA-75955">
    <property type="pathway name" value="RNA Polymerase II Transcription Elongation"/>
</dbReference>
<dbReference type="Reactome" id="R-BTA-76042">
    <property type="pathway name" value="RNA Polymerase II Transcription Initiation And Promoter Clearance"/>
</dbReference>
<dbReference type="Reactome" id="R-BTA-77075">
    <property type="pathway name" value="RNA Pol II CTD phosphorylation and interaction with CE"/>
</dbReference>
<dbReference type="Proteomes" id="UP000009136">
    <property type="component" value="Chromosome 17"/>
</dbReference>
<dbReference type="Bgee" id="ENSBTAG00000007270">
    <property type="expression patterns" value="Expressed in oocyte and 108 other cell types or tissues"/>
</dbReference>
<dbReference type="GO" id="GO:0000438">
    <property type="term" value="C:core TFIIH complex portion of holo TFIIH complex"/>
    <property type="evidence" value="ECO:0000250"/>
    <property type="project" value="UniProtKB"/>
</dbReference>
<dbReference type="GO" id="GO:0005634">
    <property type="term" value="C:nucleus"/>
    <property type="evidence" value="ECO:0000250"/>
    <property type="project" value="UniProtKB"/>
</dbReference>
<dbReference type="GO" id="GO:0000439">
    <property type="term" value="C:transcription factor TFIIH core complex"/>
    <property type="evidence" value="ECO:0000318"/>
    <property type="project" value="GO_Central"/>
</dbReference>
<dbReference type="GO" id="GO:0005675">
    <property type="term" value="C:transcription factor TFIIH holo complex"/>
    <property type="evidence" value="ECO:0000250"/>
    <property type="project" value="UniProtKB"/>
</dbReference>
<dbReference type="GO" id="GO:0008270">
    <property type="term" value="F:zinc ion binding"/>
    <property type="evidence" value="ECO:0007669"/>
    <property type="project" value="UniProtKB-KW"/>
</dbReference>
<dbReference type="GO" id="GO:0006289">
    <property type="term" value="P:nucleotide-excision repair"/>
    <property type="evidence" value="ECO:0000318"/>
    <property type="project" value="GO_Central"/>
</dbReference>
<dbReference type="GO" id="GO:0006355">
    <property type="term" value="P:regulation of DNA-templated transcription"/>
    <property type="evidence" value="ECO:0007669"/>
    <property type="project" value="InterPro"/>
</dbReference>
<dbReference type="GO" id="GO:0006366">
    <property type="term" value="P:transcription by RNA polymerase II"/>
    <property type="evidence" value="ECO:0000250"/>
    <property type="project" value="UniProtKB"/>
</dbReference>
<dbReference type="FunFam" id="3.40.50.410:FF:000045">
    <property type="entry name" value="general transcription factor IIH subunit 3 isoform X1"/>
    <property type="match status" value="1"/>
</dbReference>
<dbReference type="Gene3D" id="3.40.50.410">
    <property type="entry name" value="von Willebrand factor, type A domain"/>
    <property type="match status" value="1"/>
</dbReference>
<dbReference type="InterPro" id="IPR004600">
    <property type="entry name" value="TFIIH_Tfb4/GTF2H3"/>
</dbReference>
<dbReference type="InterPro" id="IPR036465">
    <property type="entry name" value="vWFA_dom_sf"/>
</dbReference>
<dbReference type="NCBIfam" id="TIGR00627">
    <property type="entry name" value="tfb4"/>
    <property type="match status" value="1"/>
</dbReference>
<dbReference type="PANTHER" id="PTHR12831:SF0">
    <property type="entry name" value="GENERAL TRANSCRIPTION FACTOR IIH SUBUNIT 3"/>
    <property type="match status" value="1"/>
</dbReference>
<dbReference type="PANTHER" id="PTHR12831">
    <property type="entry name" value="TRANSCRIPTION INITIATION FACTOR IIH TFIIH , POLYPEPTIDE 3-RELATED"/>
    <property type="match status" value="1"/>
</dbReference>
<dbReference type="Pfam" id="PF03850">
    <property type="entry name" value="Tfb4"/>
    <property type="match status" value="1"/>
</dbReference>
<proteinExistence type="evidence at transcript level"/>
<reference key="1">
    <citation type="submission" date="2006-08" db="EMBL/GenBank/DDBJ databases">
        <authorList>
            <consortium name="NIH - Mammalian Gene Collection (MGC) project"/>
        </authorList>
    </citation>
    <scope>NUCLEOTIDE SEQUENCE [LARGE SCALE MRNA]</scope>
    <source>
        <strain>Hereford</strain>
        <tissue>Hypothalamus</tissue>
    </source>
</reference>
<name>TF2H3_BOVIN</name>
<evidence type="ECO:0000250" key="1">
    <source>
        <dbReference type="UniProtKB" id="Q13889"/>
    </source>
</evidence>
<evidence type="ECO:0000250" key="2">
    <source>
        <dbReference type="UniProtKB" id="Q8VD76"/>
    </source>
</evidence>
<evidence type="ECO:0000305" key="3"/>
<organism>
    <name type="scientific">Bos taurus</name>
    <name type="common">Bovine</name>
    <dbReference type="NCBI Taxonomy" id="9913"/>
    <lineage>
        <taxon>Eukaryota</taxon>
        <taxon>Metazoa</taxon>
        <taxon>Chordata</taxon>
        <taxon>Craniata</taxon>
        <taxon>Vertebrata</taxon>
        <taxon>Euteleostomi</taxon>
        <taxon>Mammalia</taxon>
        <taxon>Eutheria</taxon>
        <taxon>Laurasiatheria</taxon>
        <taxon>Artiodactyla</taxon>
        <taxon>Ruminantia</taxon>
        <taxon>Pecora</taxon>
        <taxon>Bovidae</taxon>
        <taxon>Bovinae</taxon>
        <taxon>Bos</taxon>
    </lineage>
</organism>
<accession>Q05B56</accession>
<comment type="function">
    <text evidence="1">Component of the general transcription and DNA repair factor IIH (TFIIH) core complex, which is involved in general and transcription-coupled nucleotide excision repair (NER) of damaged DNA and, when complexed to CAK, in RNA transcription by RNA polymerase II. In NER, TFIIH acts by opening DNA around the lesion to allow the excision of the damaged oligonucleotide and its replacement by a new DNA fragment. In transcription, TFIIH has an essential role in transcription initiation. When the pre-initiation complex (PIC) has been established, TFIIH is required for promoter opening and promoter escape. Phosphorylation of the C-terminal tail (CTD) of the largest subunit of RNA polymerase II by the kinase module CAK controls the initiation of transcription.</text>
</comment>
<comment type="subunit">
    <text evidence="1 2">Part of a TFIID-containing RNA polymerase II pre-initiation complex that is composed of TBP and at least GTF2A1, GTF2A2, GTF2E1, GTF2E2, GTF2F1, GTF2H2, GTF2H3, GTF2H4, GTF2H5, GTF2B, TCEA1, ERCC2, ERCC3, TAF1, TAF2, TAF3, TAF4, TAF5, TAF6, TAF7, TAF8, TAF9, TAF10, TAF11, TAF12 and TAF13. Component of the 7-subunit TFIIH core complex composed of XPB/ERCC3, XPD/ERCC2, GTF2H1, GTF2H2, GTF2H3, GTF2H4 and GTF2H5, which is active in NER. The core complex associates with the 3-subunit CDK-activating kinase (CAK) module composed of CCNH/cyclin H, CDK7 and MNAT1 to form the 10-subunit holoenzyme (holo-TFIIH) active in transcription (By similarity). Interacts with RARA; the interaction requires prior phosphorylation of RARA on 'Ser-369' which then enhances interaction of RARA with CDK7 (By similarity).</text>
</comment>
<comment type="subcellular location">
    <subcellularLocation>
        <location evidence="1">Nucleus</location>
    </subcellularLocation>
</comment>
<comment type="similarity">
    <text evidence="3">Belongs to the TFB4 family.</text>
</comment>
<sequence>MVSDEDELNLLVIIVDTNPIWWGKQALKESQFTLSKCIDAVMVLGNSHLFMNRSNKLAVIASHIQESRFLYPGKNGRLGDFFGDPGNPSSEFTPSGSKDGKYELLTAANEVIAEEIKDLMTKSDIEGQHTETLLAGSLAKALCYIHRMNKEVKDNQEMKSRILVIKAAEDSALQYMNFMNVIFAAQKQNILIDACVLDSDSGLLQQACDITGGLYLKVPQMPSLLQYLLWVFLPDQDQRSQLILPPPVHVDYRAACFCHRNLIEIGYVCSVCLSIFCNFSPICTTCETAFKISLPPVLKAKKKKLKMSS</sequence>